<organism>
    <name type="scientific">Mycobacterium ulcerans (strain Agy99)</name>
    <dbReference type="NCBI Taxonomy" id="362242"/>
    <lineage>
        <taxon>Bacteria</taxon>
        <taxon>Bacillati</taxon>
        <taxon>Actinomycetota</taxon>
        <taxon>Actinomycetes</taxon>
        <taxon>Mycobacteriales</taxon>
        <taxon>Mycobacteriaceae</taxon>
        <taxon>Mycobacterium</taxon>
        <taxon>Mycobacterium ulcerans group</taxon>
    </lineage>
</organism>
<keyword id="KW-0067">ATP-binding</keyword>
<keyword id="KW-0143">Chaperone</keyword>
<keyword id="KW-0175">Coiled coil</keyword>
<keyword id="KW-0547">Nucleotide-binding</keyword>
<keyword id="KW-0647">Proteasome</keyword>
<reference key="1">
    <citation type="journal article" date="2007" name="Genome Res.">
        <title>Reductive evolution and niche adaptation inferred from the genome of Mycobacterium ulcerans, the causative agent of Buruli ulcer.</title>
        <authorList>
            <person name="Stinear T.P."/>
            <person name="Seemann T."/>
            <person name="Pidot S."/>
            <person name="Frigui W."/>
            <person name="Reysset G."/>
            <person name="Garnier T."/>
            <person name="Meurice G."/>
            <person name="Simon D."/>
            <person name="Bouchier C."/>
            <person name="Ma L."/>
            <person name="Tichit M."/>
            <person name="Porter J.L."/>
            <person name="Ryan J."/>
            <person name="Johnson P.D.R."/>
            <person name="Davies J.K."/>
            <person name="Jenkin G.A."/>
            <person name="Small P.L.C."/>
            <person name="Jones L.M."/>
            <person name="Tekaia F."/>
            <person name="Laval F."/>
            <person name="Daffe M."/>
            <person name="Parkhill J."/>
            <person name="Cole S.T."/>
        </authorList>
    </citation>
    <scope>NUCLEOTIDE SEQUENCE [LARGE SCALE GENOMIC DNA]</scope>
    <source>
        <strain>Agy99</strain>
    </source>
</reference>
<feature type="chain" id="PRO_0000397006" description="Proteasome-associated ATPase">
    <location>
        <begin position="1"/>
        <end position="609"/>
    </location>
</feature>
<feature type="region of interest" description="Disordered" evidence="2">
    <location>
        <begin position="1"/>
        <end position="24"/>
    </location>
</feature>
<feature type="region of interest" description="Docks into pockets in the proteasome alpha-ring" evidence="1">
    <location>
        <begin position="608"/>
        <end position="609"/>
    </location>
</feature>
<feature type="coiled-coil region" evidence="1">
    <location>
        <begin position="19"/>
        <end position="96"/>
    </location>
</feature>
<feature type="binding site" evidence="1">
    <location>
        <begin position="296"/>
        <end position="301"/>
    </location>
    <ligand>
        <name>ATP</name>
        <dbReference type="ChEBI" id="CHEBI:30616"/>
    </ligand>
</feature>
<sequence length="609" mass="67542">MADSERSEAFGTPDDTPLSSNDAAELEQLRREAAVLREQLESAVGPQGTARSARDVHQLEARIDSLAARNSKLMETLKEARQQLLALREEVDRLGQPPSGYGVLLSAHDDDTVDVFTSGRKMRLTCSPNIEISLLRKGQTVRLNEALTVVEAGTFESVGEISTLREVLADGHRALVVGHADEERIVWLAEPLVAEDLPDGFPDALNDDTKPRKLRPGDSLLVDTKAGYAFERIPKAEVEDLVLEEVPDVSYEDIGGLTRQIEQIRDAVELPFLHKELYREYALRPPKGVLLYGPPGCGKTLIAKAVANSLAKKMAEVRGDDSREAKSYFLNIKGPELLNKFVGETERHIRLIFQRAREKASEGTPVIVFFDEMDSIFRTRGTGVSSDVETTVVPQLLSEIDGVEGLENVIVIGASNREDMIDPAILRPGRLDVKIKIERPDAEAAQDIYSKYLTETLPVHADDLAEFEGERPACIKAMIEKVVDRMYAEIDDNRFLEVTYANGDKEVMYFKDFNSGAMIQNVVDRAKKNAIKSVLETGQPGLRIQHLLDSIVDEFAENEDLPNTTNPDDWARISGKKGERIVYIRTLVTGKSSSASRAIDTESNLGQYL</sequence>
<comment type="function">
    <text evidence="1">ATPase which is responsible for recognizing, binding, unfolding and translocation of pupylated proteins into the bacterial 20S proteasome core particle. May be essential for opening the gate of the 20S proteasome via an interaction with its C-terminus, thereby allowing substrate entry and access to the site of proteolysis. Thus, the C-termini of the proteasomal ATPase may function like a 'key in a lock' to induce gate opening and therefore regulate proteolysis.</text>
</comment>
<comment type="pathway">
    <text evidence="1">Protein degradation; proteasomal Pup-dependent pathway.</text>
</comment>
<comment type="subunit">
    <text evidence="1">Homohexamer. Assembles into a hexameric ring structure that caps the 20S proteasome core. Strongly interacts with the prokaryotic ubiquitin-like protein Pup through a hydrophobic interface; the interacting region of ARC lies in its N-terminal coiled-coil domain. There is one Pup binding site per ARC hexamer ring. Upon ATP-binding, the C-terminus of ARC interacts with the alpha-rings of the proteasome core, possibly by binding to the intersubunit pockets.</text>
</comment>
<comment type="domain">
    <text evidence="1">Consists of three main regions, an N-terminal coiled-coil domain that binds to protein Pup and functions as a docking station, an interdomain involved in ARC hexamerization, and a C-terminal ATPase domain of the AAA type.</text>
</comment>
<comment type="similarity">
    <text evidence="1">Belongs to the AAA ATPase family.</text>
</comment>
<proteinExistence type="inferred from homology"/>
<evidence type="ECO:0000255" key="1">
    <source>
        <dbReference type="HAMAP-Rule" id="MF_02112"/>
    </source>
</evidence>
<evidence type="ECO:0000256" key="2">
    <source>
        <dbReference type="SAM" id="MobiDB-lite"/>
    </source>
</evidence>
<gene>
    <name evidence="1" type="primary">mpa</name>
    <name type="ordered locus">MUL_2337</name>
</gene>
<accession>A0PQT9</accession>
<dbReference type="EMBL" id="CP000325">
    <property type="protein sequence ID" value="ABL04708.1"/>
    <property type="molecule type" value="Genomic_DNA"/>
</dbReference>
<dbReference type="RefSeq" id="WP_011740324.1">
    <property type="nucleotide sequence ID" value="NC_008611.1"/>
</dbReference>
<dbReference type="SMR" id="A0PQT9"/>
<dbReference type="KEGG" id="mul:MUL_2337"/>
<dbReference type="eggNOG" id="COG1222">
    <property type="taxonomic scope" value="Bacteria"/>
</dbReference>
<dbReference type="HOGENOM" id="CLU_036054_0_0_11"/>
<dbReference type="UniPathway" id="UPA00997"/>
<dbReference type="Proteomes" id="UP000000765">
    <property type="component" value="Chromosome"/>
</dbReference>
<dbReference type="GO" id="GO:0000502">
    <property type="term" value="C:proteasome complex"/>
    <property type="evidence" value="ECO:0007669"/>
    <property type="project" value="UniProtKB-KW"/>
</dbReference>
<dbReference type="GO" id="GO:0005524">
    <property type="term" value="F:ATP binding"/>
    <property type="evidence" value="ECO:0007669"/>
    <property type="project" value="UniProtKB-UniRule"/>
</dbReference>
<dbReference type="GO" id="GO:0016887">
    <property type="term" value="F:ATP hydrolysis activity"/>
    <property type="evidence" value="ECO:0007669"/>
    <property type="project" value="UniProtKB-UniRule"/>
</dbReference>
<dbReference type="GO" id="GO:0019941">
    <property type="term" value="P:modification-dependent protein catabolic process"/>
    <property type="evidence" value="ECO:0007669"/>
    <property type="project" value="InterPro"/>
</dbReference>
<dbReference type="GO" id="GO:0010498">
    <property type="term" value="P:proteasomal protein catabolic process"/>
    <property type="evidence" value="ECO:0007669"/>
    <property type="project" value="InterPro"/>
</dbReference>
<dbReference type="FunFam" id="1.10.8.60:FF:000122">
    <property type="entry name" value="AAA ATPase forming ring-shaped complexes"/>
    <property type="match status" value="1"/>
</dbReference>
<dbReference type="FunFam" id="1.20.5.170:FF:000018">
    <property type="entry name" value="AAA ATPase forming ring-shaped complexes"/>
    <property type="match status" value="1"/>
</dbReference>
<dbReference type="FunFam" id="2.40.50.140:FF:000169">
    <property type="entry name" value="AAA ATPase forming ring-shaped complexes"/>
    <property type="match status" value="1"/>
</dbReference>
<dbReference type="FunFam" id="3.40.50.300:FF:000155">
    <property type="entry name" value="AAA ATPase forming ring-shaped complexes"/>
    <property type="match status" value="1"/>
</dbReference>
<dbReference type="Gene3D" id="1.10.8.60">
    <property type="match status" value="1"/>
</dbReference>
<dbReference type="Gene3D" id="1.20.5.170">
    <property type="match status" value="1"/>
</dbReference>
<dbReference type="Gene3D" id="2.40.50.140">
    <property type="entry name" value="Nucleic acid-binding proteins"/>
    <property type="match status" value="2"/>
</dbReference>
<dbReference type="Gene3D" id="3.40.50.300">
    <property type="entry name" value="P-loop containing nucleotide triphosphate hydrolases"/>
    <property type="match status" value="1"/>
</dbReference>
<dbReference type="HAMAP" id="MF_02112">
    <property type="entry name" value="ARC_ATPase"/>
    <property type="match status" value="1"/>
</dbReference>
<dbReference type="InterPro" id="IPR003593">
    <property type="entry name" value="AAA+_ATPase"/>
</dbReference>
<dbReference type="InterPro" id="IPR050168">
    <property type="entry name" value="AAA_ATPase_domain"/>
</dbReference>
<dbReference type="InterPro" id="IPR003959">
    <property type="entry name" value="ATPase_AAA_core"/>
</dbReference>
<dbReference type="InterPro" id="IPR003960">
    <property type="entry name" value="ATPase_AAA_CS"/>
</dbReference>
<dbReference type="InterPro" id="IPR012340">
    <property type="entry name" value="NA-bd_OB-fold"/>
</dbReference>
<dbReference type="InterPro" id="IPR027417">
    <property type="entry name" value="P-loop_NTPase"/>
</dbReference>
<dbReference type="InterPro" id="IPR032501">
    <property type="entry name" value="Prot_ATP_ID_OB_2nd"/>
</dbReference>
<dbReference type="InterPro" id="IPR041626">
    <property type="entry name" value="Prot_ATP_ID_OB_N"/>
</dbReference>
<dbReference type="InterPro" id="IPR022482">
    <property type="entry name" value="Proteasome_ATPase"/>
</dbReference>
<dbReference type="NCBIfam" id="TIGR03689">
    <property type="entry name" value="pup_AAA"/>
    <property type="match status" value="1"/>
</dbReference>
<dbReference type="PANTHER" id="PTHR23077">
    <property type="entry name" value="AAA-FAMILY ATPASE"/>
    <property type="match status" value="1"/>
</dbReference>
<dbReference type="PANTHER" id="PTHR23077:SF144">
    <property type="entry name" value="PROTEASOME-ASSOCIATED ATPASE"/>
    <property type="match status" value="1"/>
</dbReference>
<dbReference type="Pfam" id="PF00004">
    <property type="entry name" value="AAA"/>
    <property type="match status" value="1"/>
</dbReference>
<dbReference type="Pfam" id="PF16450">
    <property type="entry name" value="Prot_ATP_ID_OB_C"/>
    <property type="match status" value="1"/>
</dbReference>
<dbReference type="Pfam" id="PF17758">
    <property type="entry name" value="Prot_ATP_ID_OB_N"/>
    <property type="match status" value="1"/>
</dbReference>
<dbReference type="SMART" id="SM00382">
    <property type="entry name" value="AAA"/>
    <property type="match status" value="1"/>
</dbReference>
<dbReference type="SUPFAM" id="SSF52540">
    <property type="entry name" value="P-loop containing nucleoside triphosphate hydrolases"/>
    <property type="match status" value="1"/>
</dbReference>
<dbReference type="PROSITE" id="PS00674">
    <property type="entry name" value="AAA"/>
    <property type="match status" value="1"/>
</dbReference>
<protein>
    <recommendedName>
        <fullName evidence="1">Proteasome-associated ATPase</fullName>
    </recommendedName>
    <alternativeName>
        <fullName evidence="1">AAA ATPase forming ring-shaped complexes</fullName>
        <shortName evidence="1">ARC</shortName>
    </alternativeName>
    <alternativeName>
        <fullName evidence="1">Mycobacterial proteasome ATPase</fullName>
    </alternativeName>
</protein>
<name>ARC_MYCUA</name>